<dbReference type="EC" id="3.4.21.-"/>
<dbReference type="EMBL" id="AJ431180">
    <property type="protein sequence ID" value="CAD24010.1"/>
    <property type="molecule type" value="Genomic_DNA"/>
</dbReference>
<dbReference type="SMR" id="Q8J0D7"/>
<dbReference type="MEROPS" id="S08.115"/>
<dbReference type="GlyCosmos" id="Q8J0D7">
    <property type="glycosylation" value="2 sites, No reported glycans"/>
</dbReference>
<dbReference type="GO" id="GO:0005576">
    <property type="term" value="C:extracellular region"/>
    <property type="evidence" value="ECO:0007669"/>
    <property type="project" value="UniProtKB-SubCell"/>
</dbReference>
<dbReference type="GO" id="GO:0004252">
    <property type="term" value="F:serine-type endopeptidase activity"/>
    <property type="evidence" value="ECO:0007669"/>
    <property type="project" value="InterPro"/>
</dbReference>
<dbReference type="GO" id="GO:0006508">
    <property type="term" value="P:proteolysis"/>
    <property type="evidence" value="ECO:0007669"/>
    <property type="project" value="UniProtKB-KW"/>
</dbReference>
<dbReference type="CDD" id="cd04077">
    <property type="entry name" value="Peptidases_S8_PCSK9_ProteinaseK_like"/>
    <property type="match status" value="1"/>
</dbReference>
<dbReference type="FunFam" id="3.40.50.200:FF:000014">
    <property type="entry name" value="Proteinase K"/>
    <property type="match status" value="1"/>
</dbReference>
<dbReference type="Gene3D" id="3.30.70.80">
    <property type="entry name" value="Peptidase S8 propeptide/proteinase inhibitor I9"/>
    <property type="match status" value="1"/>
</dbReference>
<dbReference type="Gene3D" id="3.40.50.200">
    <property type="entry name" value="Peptidase S8/S53 domain"/>
    <property type="match status" value="1"/>
</dbReference>
<dbReference type="InterPro" id="IPR034193">
    <property type="entry name" value="PCSK9_ProteinaseK-like"/>
</dbReference>
<dbReference type="InterPro" id="IPR000209">
    <property type="entry name" value="Peptidase_S8/S53_dom"/>
</dbReference>
<dbReference type="InterPro" id="IPR036852">
    <property type="entry name" value="Peptidase_S8/S53_dom_sf"/>
</dbReference>
<dbReference type="InterPro" id="IPR023828">
    <property type="entry name" value="Peptidase_S8_Ser-AS"/>
</dbReference>
<dbReference type="InterPro" id="IPR050131">
    <property type="entry name" value="Peptidase_S8_subtilisin-like"/>
</dbReference>
<dbReference type="InterPro" id="IPR015500">
    <property type="entry name" value="Peptidase_S8_subtilisin-rel"/>
</dbReference>
<dbReference type="InterPro" id="IPR010259">
    <property type="entry name" value="S8pro/Inhibitor_I9"/>
</dbReference>
<dbReference type="InterPro" id="IPR037045">
    <property type="entry name" value="S8pro/Inhibitor_I9_sf"/>
</dbReference>
<dbReference type="PANTHER" id="PTHR43806:SF11">
    <property type="entry name" value="CEREVISIN-RELATED"/>
    <property type="match status" value="1"/>
</dbReference>
<dbReference type="PANTHER" id="PTHR43806">
    <property type="entry name" value="PEPTIDASE S8"/>
    <property type="match status" value="1"/>
</dbReference>
<dbReference type="Pfam" id="PF05922">
    <property type="entry name" value="Inhibitor_I9"/>
    <property type="match status" value="1"/>
</dbReference>
<dbReference type="Pfam" id="PF00082">
    <property type="entry name" value="Peptidase_S8"/>
    <property type="match status" value="1"/>
</dbReference>
<dbReference type="PRINTS" id="PR00723">
    <property type="entry name" value="SUBTILISIN"/>
</dbReference>
<dbReference type="SUPFAM" id="SSF54897">
    <property type="entry name" value="Protease propeptides/inhibitors"/>
    <property type="match status" value="1"/>
</dbReference>
<dbReference type="SUPFAM" id="SSF52743">
    <property type="entry name" value="Subtilisin-like"/>
    <property type="match status" value="1"/>
</dbReference>
<dbReference type="PROSITE" id="PS51892">
    <property type="entry name" value="SUBTILASE"/>
    <property type="match status" value="1"/>
</dbReference>
<dbReference type="PROSITE" id="PS00138">
    <property type="entry name" value="SUBTILASE_SER"/>
    <property type="match status" value="1"/>
</dbReference>
<comment type="function">
    <text evidence="1">Secreted subtilisin-like serine protease with keratinolytic activity that contributes to pathogenicity.</text>
</comment>
<comment type="subcellular location">
    <subcellularLocation>
        <location evidence="4">Secreted</location>
    </subcellularLocation>
</comment>
<comment type="similarity">
    <text evidence="5">Belongs to the peptidase S8 family.</text>
</comment>
<name>SUB3_ARTOT</name>
<accession>Q8J0D7</accession>
<proteinExistence type="evidence at protein level"/>
<keyword id="KW-0325">Glycoprotein</keyword>
<keyword id="KW-0378">Hydrolase</keyword>
<keyword id="KW-0645">Protease</keyword>
<keyword id="KW-0964">Secreted</keyword>
<keyword id="KW-0720">Serine protease</keyword>
<keyword id="KW-0732">Signal</keyword>
<keyword id="KW-0843">Virulence</keyword>
<keyword id="KW-0865">Zymogen</keyword>
<evidence type="ECO:0000250" key="1"/>
<evidence type="ECO:0000255" key="2"/>
<evidence type="ECO:0000255" key="3">
    <source>
        <dbReference type="PROSITE-ProRule" id="PRU01240"/>
    </source>
</evidence>
<evidence type="ECO:0000269" key="4">
    <source>
    </source>
</evidence>
<evidence type="ECO:0000305" key="5"/>
<gene>
    <name type="primary">SUB3</name>
</gene>
<organism>
    <name type="scientific">Arthroderma otae</name>
    <name type="common">Microsporum canis</name>
    <dbReference type="NCBI Taxonomy" id="63405"/>
    <lineage>
        <taxon>Eukaryota</taxon>
        <taxon>Fungi</taxon>
        <taxon>Dikarya</taxon>
        <taxon>Ascomycota</taxon>
        <taxon>Pezizomycotina</taxon>
        <taxon>Eurotiomycetes</taxon>
        <taxon>Eurotiomycetidae</taxon>
        <taxon>Onygenales</taxon>
        <taxon>Arthrodermataceae</taxon>
        <taxon>Microsporum</taxon>
    </lineage>
</organism>
<protein>
    <recommendedName>
        <fullName>Subtilisin-like protease 3</fullName>
        <ecNumber>3.4.21.-</ecNumber>
    </recommendedName>
</protein>
<reference key="1">
    <citation type="journal article" date="2002" name="J. Invest. Dermatol.">
        <title>Isolation of a Microsporum canis gene family encoding three subtilisin-like proteases expressed in vivo.</title>
        <authorList>
            <person name="Descamps F."/>
            <person name="Brouta F."/>
            <person name="Monod M."/>
            <person name="Zaugg C."/>
            <person name="Baar D."/>
            <person name="Losson B."/>
            <person name="Mignon B."/>
        </authorList>
    </citation>
    <scope>NUCLEOTIDE SEQUENCE [GENOMIC DNA]</scope>
    <source>
        <strain>IHEM 15221</strain>
    </source>
</reference>
<reference key="2">
    <citation type="journal article" date="2004" name="Gene">
        <title>Secreted subtilisin gene family in Trichophyton rubrum.</title>
        <authorList>
            <person name="Jousson O."/>
            <person name="Lechenne B."/>
            <person name="Bontems O."/>
            <person name="Mignon B."/>
            <person name="Reichard U."/>
            <person name="Barblan J."/>
            <person name="Quadroni M."/>
            <person name="Monod M."/>
        </authorList>
    </citation>
    <scope>IDENTIFICATION BY MASS SPECTROMETRY</scope>
    <scope>SUBCELLULAR LOCATION</scope>
</reference>
<sequence length="397" mass="40855">MGCIKVISVFLAAVAAVDARAFFHNRGGNDVIPNSYIVVMKDGVTAEDFDSHISSVATTHSINKAKRGSETVGHKDSFNINGWRAYNGHFDEATIESILNDDKVDYVEHDRVVKLAALTTQPNAPTWGLGRVSHKAPGNKDFVYDSSAGQGVTIYGVDTGIDINHPEFRGRIRWGTNTVDNDNTDGNGHGTHTAGTFAGTTYGVAKKANIVAVKVLSAGGSGSTAGVIKGIDWCVTDAKAKGALGKAALNLSLGGAFSQANNDAVTRAQNAGIFVAVAAGNDNKDAKNSSPASAPAVCTAASSTIDDQKSSFSNWGTIVDIYAPGSNILSAAPGGGTRTLSGTSMASPHVCGVGAAMLAQGVSVAQACDRIKQIANAVIKNPGTGTTNKLLYNGSGR</sequence>
<feature type="signal peptide" evidence="2">
    <location>
        <begin position="1"/>
        <end position="19"/>
    </location>
</feature>
<feature type="propeptide" id="PRO_5000068280" evidence="1">
    <location>
        <begin position="20"/>
        <end position="116"/>
    </location>
</feature>
<feature type="chain" id="PRO_5000068281" description="Subtilisin-like protease 3">
    <location>
        <begin position="117"/>
        <end position="397"/>
    </location>
</feature>
<feature type="domain" description="Inhibitor I9" evidence="2">
    <location>
        <begin position="35"/>
        <end position="116"/>
    </location>
</feature>
<feature type="domain" description="Peptidase S8" evidence="3">
    <location>
        <begin position="126"/>
        <end position="397"/>
    </location>
</feature>
<feature type="active site" description="Charge relay system" evidence="3">
    <location>
        <position position="158"/>
    </location>
</feature>
<feature type="active site" description="Charge relay system" evidence="3">
    <location>
        <position position="189"/>
    </location>
</feature>
<feature type="active site" description="Charge relay system" evidence="3">
    <location>
        <position position="344"/>
    </location>
</feature>
<feature type="glycosylation site" description="N-linked (GlcNAc...) asparagine" evidence="2">
    <location>
        <position position="250"/>
    </location>
</feature>
<feature type="glycosylation site" description="N-linked (GlcNAc...) asparagine" evidence="2">
    <location>
        <position position="393"/>
    </location>
</feature>